<reference key="1">
    <citation type="submission" date="1999-05" db="EMBL/GenBank/DDBJ databases">
        <title>Cloning and characterization of PBP5 of Pseudomonas aeruginosa.</title>
        <authorList>
            <person name="Gagnon L.A."/>
            <person name="Castro-Urbina I.M."/>
            <person name="Liao X."/>
            <person name="Hancock R.E.W."/>
            <person name="Clarke A.J."/>
            <person name="Huletsky A."/>
        </authorList>
    </citation>
    <scope>NUCLEOTIDE SEQUENCE [GENOMIC DNA]</scope>
    <source>
        <strain>ATCC 15692 / DSM 22644 / CIP 104116 / JCM 14847 / LMG 12228 / 1C / PRS 101 / PAO1</strain>
    </source>
</reference>
<reference key="2">
    <citation type="journal article" date="2000" name="Nature">
        <title>Complete genome sequence of Pseudomonas aeruginosa PAO1, an opportunistic pathogen.</title>
        <authorList>
            <person name="Stover C.K."/>
            <person name="Pham X.-Q.T."/>
            <person name="Erwin A.L."/>
            <person name="Mizoguchi S.D."/>
            <person name="Warrener P."/>
            <person name="Hickey M.J."/>
            <person name="Brinkman F.S.L."/>
            <person name="Hufnagle W.O."/>
            <person name="Kowalik D.J."/>
            <person name="Lagrou M."/>
            <person name="Garber R.L."/>
            <person name="Goltry L."/>
            <person name="Tolentino E."/>
            <person name="Westbrock-Wadman S."/>
            <person name="Yuan Y."/>
            <person name="Brody L.L."/>
            <person name="Coulter S.N."/>
            <person name="Folger K.R."/>
            <person name="Kas A."/>
            <person name="Larbig K."/>
            <person name="Lim R.M."/>
            <person name="Smith K.A."/>
            <person name="Spencer D.H."/>
            <person name="Wong G.K.-S."/>
            <person name="Wu Z."/>
            <person name="Paulsen I.T."/>
            <person name="Reizer J."/>
            <person name="Saier M.H. Jr."/>
            <person name="Hancock R.E.W."/>
            <person name="Lory S."/>
            <person name="Olson M.V."/>
        </authorList>
    </citation>
    <scope>NUCLEOTIDE SEQUENCE [LARGE SCALE GENOMIC DNA]</scope>
    <source>
        <strain>ATCC 15692 / DSM 22644 / CIP 104116 / JCM 14847 / LMG 12228 / 1C / PRS 101 / PAO1</strain>
    </source>
</reference>
<feature type="signal peptide" evidence="1">
    <location>
        <begin position="1"/>
        <end position="26"/>
    </location>
</feature>
<feature type="chain" id="PRO_0000030809" description="Endolytic peptidoglycan transglycosylase RlpA" evidence="1">
    <location>
        <begin position="27"/>
        <end position="342"/>
    </location>
</feature>
<feature type="domain" description="SPOR" evidence="1">
    <location>
        <begin position="261"/>
        <end position="342"/>
    </location>
</feature>
<feature type="lipid moiety-binding region" description="N-palmitoyl cysteine" evidence="1">
    <location>
        <position position="27"/>
    </location>
</feature>
<feature type="lipid moiety-binding region" description="S-diacylglycerol cysteine" evidence="1">
    <location>
        <position position="27"/>
    </location>
</feature>
<feature type="strand" evidence="2">
    <location>
        <begin position="267"/>
        <end position="276"/>
    </location>
</feature>
<feature type="helix" evidence="2">
    <location>
        <begin position="277"/>
        <end position="288"/>
    </location>
</feature>
<feature type="strand" evidence="2">
    <location>
        <begin position="295"/>
        <end position="302"/>
    </location>
</feature>
<feature type="strand" evidence="2">
    <location>
        <begin position="305"/>
        <end position="316"/>
    </location>
</feature>
<feature type="helix" evidence="2">
    <location>
        <begin position="318"/>
        <end position="330"/>
    </location>
</feature>
<feature type="strand" evidence="2">
    <location>
        <begin position="337"/>
        <end position="339"/>
    </location>
</feature>
<protein>
    <recommendedName>
        <fullName evidence="1">Endolytic peptidoglycan transglycosylase RlpA</fullName>
        <ecNumber evidence="1">4.2.2.-</ecNumber>
    </recommendedName>
    <alternativeName>
        <fullName>Rare lipoprotein A</fullName>
    </alternativeName>
</protein>
<gene>
    <name evidence="1" type="primary">rlpA</name>
    <name type="ordered locus">PA4000</name>
</gene>
<keyword id="KW-0002">3D-structure</keyword>
<keyword id="KW-1003">Cell membrane</keyword>
<keyword id="KW-0961">Cell wall biogenesis/degradation</keyword>
<keyword id="KW-0449">Lipoprotein</keyword>
<keyword id="KW-0456">Lyase</keyword>
<keyword id="KW-0472">Membrane</keyword>
<keyword id="KW-0564">Palmitate</keyword>
<keyword id="KW-1185">Reference proteome</keyword>
<keyword id="KW-0732">Signal</keyword>
<organism>
    <name type="scientific">Pseudomonas aeruginosa (strain ATCC 15692 / DSM 22644 / CIP 104116 / JCM 14847 / LMG 12228 / 1C / PRS 101 / PAO1)</name>
    <dbReference type="NCBI Taxonomy" id="208964"/>
    <lineage>
        <taxon>Bacteria</taxon>
        <taxon>Pseudomonadati</taxon>
        <taxon>Pseudomonadota</taxon>
        <taxon>Gammaproteobacteria</taxon>
        <taxon>Pseudomonadales</taxon>
        <taxon>Pseudomonadaceae</taxon>
        <taxon>Pseudomonas</taxon>
    </lineage>
</organism>
<name>RLPA_PSEAE</name>
<proteinExistence type="evidence at protein level"/>
<evidence type="ECO:0000255" key="1">
    <source>
        <dbReference type="HAMAP-Rule" id="MF_02071"/>
    </source>
</evidence>
<evidence type="ECO:0007829" key="2">
    <source>
        <dbReference type="PDB" id="6I05"/>
    </source>
</evidence>
<dbReference type="EC" id="4.2.2.-" evidence="1"/>
<dbReference type="EMBL" id="AF147448">
    <property type="protein sequence ID" value="AAD32233.1"/>
    <property type="molecule type" value="Genomic_DNA"/>
</dbReference>
<dbReference type="EMBL" id="AE004091">
    <property type="protein sequence ID" value="AAG07387.1"/>
    <property type="molecule type" value="Genomic_DNA"/>
</dbReference>
<dbReference type="PIR" id="D83146">
    <property type="entry name" value="D83146"/>
</dbReference>
<dbReference type="RefSeq" id="NP_252689.1">
    <property type="nucleotide sequence ID" value="NC_002516.2"/>
</dbReference>
<dbReference type="RefSeq" id="WP_003100310.1">
    <property type="nucleotide sequence ID" value="NZ_QZGE01000038.1"/>
</dbReference>
<dbReference type="PDB" id="6I05">
    <property type="method" value="X-ray"/>
    <property type="resolution" value="1.21 A"/>
    <property type="chains" value="A=264-342"/>
</dbReference>
<dbReference type="PDB" id="6I09">
    <property type="method" value="X-ray"/>
    <property type="resolution" value="1.48 A"/>
    <property type="chains" value="A=265-342"/>
</dbReference>
<dbReference type="PDB" id="6I0A">
    <property type="method" value="X-ray"/>
    <property type="resolution" value="1.30 A"/>
    <property type="chains" value="A=266-342"/>
</dbReference>
<dbReference type="PDB" id="6I0N">
    <property type="method" value="X-ray"/>
    <property type="resolution" value="1.40 A"/>
    <property type="chains" value="A=266-342"/>
</dbReference>
<dbReference type="PDBsum" id="6I05"/>
<dbReference type="PDBsum" id="6I09"/>
<dbReference type="PDBsum" id="6I0A"/>
<dbReference type="PDBsum" id="6I0N"/>
<dbReference type="SMR" id="Q9X6V6"/>
<dbReference type="FunCoup" id="Q9X6V6">
    <property type="interactions" value="48"/>
</dbReference>
<dbReference type="STRING" id="208964.PA4000"/>
<dbReference type="PaxDb" id="208964-PA4000"/>
<dbReference type="GeneID" id="878957"/>
<dbReference type="KEGG" id="pae:PA4000"/>
<dbReference type="PATRIC" id="fig|208964.12.peg.4192"/>
<dbReference type="PseudoCAP" id="PA4000"/>
<dbReference type="HOGENOM" id="CLU_042923_3_2_6"/>
<dbReference type="InParanoid" id="Q9X6V6"/>
<dbReference type="OrthoDB" id="9779128at2"/>
<dbReference type="PhylomeDB" id="Q9X6V6"/>
<dbReference type="BioCyc" id="PAER208964:G1FZ6-4073-MONOMER"/>
<dbReference type="Proteomes" id="UP000002438">
    <property type="component" value="Chromosome"/>
</dbReference>
<dbReference type="GO" id="GO:0009279">
    <property type="term" value="C:cell outer membrane"/>
    <property type="evidence" value="ECO:0000318"/>
    <property type="project" value="GO_Central"/>
</dbReference>
<dbReference type="GO" id="GO:0005886">
    <property type="term" value="C:plasma membrane"/>
    <property type="evidence" value="ECO:0007669"/>
    <property type="project" value="UniProtKB-SubCell"/>
</dbReference>
<dbReference type="GO" id="GO:0008932">
    <property type="term" value="F:lytic endotransglycosylase activity"/>
    <property type="evidence" value="ECO:0007669"/>
    <property type="project" value="UniProtKB-UniRule"/>
</dbReference>
<dbReference type="GO" id="GO:0042834">
    <property type="term" value="F:peptidoglycan binding"/>
    <property type="evidence" value="ECO:0007669"/>
    <property type="project" value="InterPro"/>
</dbReference>
<dbReference type="GO" id="GO:0071555">
    <property type="term" value="P:cell wall organization"/>
    <property type="evidence" value="ECO:0007669"/>
    <property type="project" value="UniProtKB-KW"/>
</dbReference>
<dbReference type="GO" id="GO:0000270">
    <property type="term" value="P:peptidoglycan metabolic process"/>
    <property type="evidence" value="ECO:0007669"/>
    <property type="project" value="UniProtKB-UniRule"/>
</dbReference>
<dbReference type="CDD" id="cd22268">
    <property type="entry name" value="DPBB_RlpA-like"/>
    <property type="match status" value="1"/>
</dbReference>
<dbReference type="FunFam" id="2.40.40.10:FF:000003">
    <property type="entry name" value="Endolytic peptidoglycan transglycosylase RlpA"/>
    <property type="match status" value="1"/>
</dbReference>
<dbReference type="Gene3D" id="2.40.40.10">
    <property type="entry name" value="RlpA-like domain"/>
    <property type="match status" value="1"/>
</dbReference>
<dbReference type="Gene3D" id="3.30.70.1070">
    <property type="entry name" value="Sporulation related repeat"/>
    <property type="match status" value="1"/>
</dbReference>
<dbReference type="HAMAP" id="MF_02071">
    <property type="entry name" value="RlpA"/>
    <property type="match status" value="1"/>
</dbReference>
<dbReference type="InterPro" id="IPR034718">
    <property type="entry name" value="RlpA"/>
</dbReference>
<dbReference type="InterPro" id="IPR009009">
    <property type="entry name" value="RlpA-like_DPBB"/>
</dbReference>
<dbReference type="InterPro" id="IPR036908">
    <property type="entry name" value="RlpA-like_sf"/>
</dbReference>
<dbReference type="InterPro" id="IPR012997">
    <property type="entry name" value="RplA"/>
</dbReference>
<dbReference type="InterPro" id="IPR007730">
    <property type="entry name" value="SPOR-like_dom"/>
</dbReference>
<dbReference type="InterPro" id="IPR036680">
    <property type="entry name" value="SPOR-like_sf"/>
</dbReference>
<dbReference type="NCBIfam" id="TIGR00413">
    <property type="entry name" value="rlpA"/>
    <property type="match status" value="1"/>
</dbReference>
<dbReference type="PANTHER" id="PTHR34183">
    <property type="entry name" value="ENDOLYTIC PEPTIDOGLYCAN TRANSGLYCOSYLASE RLPA"/>
    <property type="match status" value="1"/>
</dbReference>
<dbReference type="PANTHER" id="PTHR34183:SF1">
    <property type="entry name" value="ENDOLYTIC PEPTIDOGLYCAN TRANSGLYCOSYLASE RLPA"/>
    <property type="match status" value="1"/>
</dbReference>
<dbReference type="Pfam" id="PF03330">
    <property type="entry name" value="DPBB_1"/>
    <property type="match status" value="1"/>
</dbReference>
<dbReference type="Pfam" id="PF05036">
    <property type="entry name" value="SPOR"/>
    <property type="match status" value="1"/>
</dbReference>
<dbReference type="SUPFAM" id="SSF50685">
    <property type="entry name" value="Barwin-like endoglucanases"/>
    <property type="match status" value="1"/>
</dbReference>
<dbReference type="SUPFAM" id="SSF110997">
    <property type="entry name" value="Sporulation related repeat"/>
    <property type="match status" value="1"/>
</dbReference>
<dbReference type="PROSITE" id="PS51257">
    <property type="entry name" value="PROKAR_LIPOPROTEIN"/>
    <property type="match status" value="1"/>
</dbReference>
<dbReference type="PROSITE" id="PS51724">
    <property type="entry name" value="SPOR"/>
    <property type="match status" value="1"/>
</dbReference>
<sequence>MSKRVRSSLILPAVCGLGLAAVLLSSCSSKAPQQPARQAGISGPGDYSRPHRDGAPWWDVDVSRIPDAVPMPHNGSVKANPYTVLGKTYYPMNDARAYRMVGTASWYGTKFHGQATANGETYDLYGMTAAHKTLPLPSYVRVTNLDNGKSVIVRVNDRGPFYSDRVIDLSFAAAKKLGYAETGTARVKVEGIDPVQWWAQRGRPAPMVLAQPKQAVAQAAPAAAQTQAVAMAQPIETYTPPPAQHAAAVLPVQIDSKKNASLPADGLYLQVGAFANPDAAELLKAKLSGVTAAPVFISSVVRNQQILHRVRLGPIGSADEVSRTQDSIRVANLGQPTLVRPD</sequence>
<comment type="function">
    <text evidence="1">Lytic transglycosylase with a strong preference for naked glycan strands that lack stem peptides.</text>
</comment>
<comment type="subcellular location">
    <subcellularLocation>
        <location evidence="1">Cell membrane</location>
        <topology evidence="1">Lipid-anchor</topology>
    </subcellularLocation>
</comment>
<comment type="similarity">
    <text evidence="1">Belongs to the RlpA family.</text>
</comment>
<accession>Q9X6V6</accession>